<sequence length="344" mass="37365">MKPKLLFEQLLSRQDLSSDQMQEVIHACMTGEFSDVQIATFLALMRMKGETVNELTAAAQVMRQLAHKIDLGNPLIDIVGTGGDGRNTFNVSTACSFVVAAAGIKVAKHGNRSVSSRSGSADLLEQAGFILNLSDSQVQNCINQCQLAFLFAPHYHPAMQHARAARQQLGIRTLFNLLGPLINPAQVKRQVVGVFSTNWLKTIATVLANLGSERSLVISSQDGLDEISIAAKSEVVEYRDGNFKQWFISPEDYGLKHSSLDAIIVDSPEQSLHLIQSVLSGDSGPARDIVLLNSAAAIYCAKDGISFDAAIEEARIAIDSGKANLCFNKLRLLTQTLNKESNHE</sequence>
<comment type="function">
    <text evidence="1">Catalyzes the transfer of the phosphoribosyl group of 5-phosphorylribose-1-pyrophosphate (PRPP) to anthranilate to yield N-(5'-phosphoribosyl)-anthranilate (PRA).</text>
</comment>
<comment type="catalytic activity">
    <reaction evidence="1">
        <text>N-(5-phospho-beta-D-ribosyl)anthranilate + diphosphate = 5-phospho-alpha-D-ribose 1-diphosphate + anthranilate</text>
        <dbReference type="Rhea" id="RHEA:11768"/>
        <dbReference type="ChEBI" id="CHEBI:16567"/>
        <dbReference type="ChEBI" id="CHEBI:18277"/>
        <dbReference type="ChEBI" id="CHEBI:33019"/>
        <dbReference type="ChEBI" id="CHEBI:58017"/>
        <dbReference type="EC" id="2.4.2.18"/>
    </reaction>
</comment>
<comment type="cofactor">
    <cofactor evidence="1">
        <name>Mg(2+)</name>
        <dbReference type="ChEBI" id="CHEBI:18420"/>
    </cofactor>
    <text evidence="1">Binds 2 magnesium ions per monomer.</text>
</comment>
<comment type="pathway">
    <text evidence="1">Amino-acid biosynthesis; L-tryptophan biosynthesis; L-tryptophan from chorismate: step 2/5.</text>
</comment>
<comment type="subunit">
    <text evidence="1">Homodimer.</text>
</comment>
<comment type="similarity">
    <text evidence="1">Belongs to the anthranilate phosphoribosyltransferase family.</text>
</comment>
<feature type="chain" id="PRO_0000227166" description="Anthranilate phosphoribosyltransferase">
    <location>
        <begin position="1"/>
        <end position="344"/>
    </location>
</feature>
<feature type="binding site" evidence="1">
    <location>
        <position position="80"/>
    </location>
    <ligand>
        <name>5-phospho-alpha-D-ribose 1-diphosphate</name>
        <dbReference type="ChEBI" id="CHEBI:58017"/>
    </ligand>
</feature>
<feature type="binding site" evidence="1">
    <location>
        <position position="80"/>
    </location>
    <ligand>
        <name>anthranilate</name>
        <dbReference type="ChEBI" id="CHEBI:16567"/>
        <label>1</label>
    </ligand>
</feature>
<feature type="binding site" evidence="1">
    <location>
        <begin position="83"/>
        <end position="84"/>
    </location>
    <ligand>
        <name>5-phospho-alpha-D-ribose 1-diphosphate</name>
        <dbReference type="ChEBI" id="CHEBI:58017"/>
    </ligand>
</feature>
<feature type="binding site" evidence="1">
    <location>
        <position position="88"/>
    </location>
    <ligand>
        <name>5-phospho-alpha-D-ribose 1-diphosphate</name>
        <dbReference type="ChEBI" id="CHEBI:58017"/>
    </ligand>
</feature>
<feature type="binding site" evidence="1">
    <location>
        <begin position="90"/>
        <end position="93"/>
    </location>
    <ligand>
        <name>5-phospho-alpha-D-ribose 1-diphosphate</name>
        <dbReference type="ChEBI" id="CHEBI:58017"/>
    </ligand>
</feature>
<feature type="binding site" evidence="1">
    <location>
        <position position="92"/>
    </location>
    <ligand>
        <name>Mg(2+)</name>
        <dbReference type="ChEBI" id="CHEBI:18420"/>
        <label>1</label>
    </ligand>
</feature>
<feature type="binding site" evidence="1">
    <location>
        <begin position="108"/>
        <end position="116"/>
    </location>
    <ligand>
        <name>5-phospho-alpha-D-ribose 1-diphosphate</name>
        <dbReference type="ChEBI" id="CHEBI:58017"/>
    </ligand>
</feature>
<feature type="binding site" evidence="1">
    <location>
        <position position="111"/>
    </location>
    <ligand>
        <name>anthranilate</name>
        <dbReference type="ChEBI" id="CHEBI:16567"/>
        <label>1</label>
    </ligand>
</feature>
<feature type="binding site" evidence="1">
    <location>
        <position position="120"/>
    </location>
    <ligand>
        <name>5-phospho-alpha-D-ribose 1-diphosphate</name>
        <dbReference type="ChEBI" id="CHEBI:58017"/>
    </ligand>
</feature>
<feature type="binding site" evidence="1">
    <location>
        <position position="166"/>
    </location>
    <ligand>
        <name>anthranilate</name>
        <dbReference type="ChEBI" id="CHEBI:16567"/>
        <label>2</label>
    </ligand>
</feature>
<feature type="binding site" evidence="1">
    <location>
        <position position="225"/>
    </location>
    <ligand>
        <name>Mg(2+)</name>
        <dbReference type="ChEBI" id="CHEBI:18420"/>
        <label>2</label>
    </ligand>
</feature>
<feature type="binding site" evidence="1">
    <location>
        <position position="226"/>
    </location>
    <ligand>
        <name>Mg(2+)</name>
        <dbReference type="ChEBI" id="CHEBI:18420"/>
        <label>1</label>
    </ligand>
</feature>
<feature type="binding site" evidence="1">
    <location>
        <position position="226"/>
    </location>
    <ligand>
        <name>Mg(2+)</name>
        <dbReference type="ChEBI" id="CHEBI:18420"/>
        <label>2</label>
    </ligand>
</feature>
<reference key="1">
    <citation type="journal article" date="2004" name="Science">
        <title>The genomic sequence of the accidental pathogen Legionella pneumophila.</title>
        <authorList>
            <person name="Chien M."/>
            <person name="Morozova I."/>
            <person name="Shi S."/>
            <person name="Sheng H."/>
            <person name="Chen J."/>
            <person name="Gomez S.M."/>
            <person name="Asamani G."/>
            <person name="Hill K."/>
            <person name="Nuara J."/>
            <person name="Feder M."/>
            <person name="Rineer J."/>
            <person name="Greenberg J.J."/>
            <person name="Steshenko V."/>
            <person name="Park S.H."/>
            <person name="Zhao B."/>
            <person name="Teplitskaya E."/>
            <person name="Edwards J.R."/>
            <person name="Pampou S."/>
            <person name="Georghiou A."/>
            <person name="Chou I.-C."/>
            <person name="Iannuccilli W."/>
            <person name="Ulz M.E."/>
            <person name="Kim D.H."/>
            <person name="Geringer-Sameth A."/>
            <person name="Goldsberry C."/>
            <person name="Morozov P."/>
            <person name="Fischer S.G."/>
            <person name="Segal G."/>
            <person name="Qu X."/>
            <person name="Rzhetsky A."/>
            <person name="Zhang P."/>
            <person name="Cayanis E."/>
            <person name="De Jong P.J."/>
            <person name="Ju J."/>
            <person name="Kalachikov S."/>
            <person name="Shuman H.A."/>
            <person name="Russo J.J."/>
        </authorList>
    </citation>
    <scope>NUCLEOTIDE SEQUENCE [LARGE SCALE GENOMIC DNA]</scope>
    <source>
        <strain>Philadelphia 1 / ATCC 33152 / DSM 7513</strain>
    </source>
</reference>
<dbReference type="EC" id="2.4.2.18" evidence="1"/>
<dbReference type="EMBL" id="AE017354">
    <property type="protein sequence ID" value="AAU26922.1"/>
    <property type="molecule type" value="Genomic_DNA"/>
</dbReference>
<dbReference type="RefSeq" id="WP_010946570.1">
    <property type="nucleotide sequence ID" value="NC_002942.5"/>
</dbReference>
<dbReference type="RefSeq" id="YP_094869.1">
    <property type="nucleotide sequence ID" value="NC_002942.5"/>
</dbReference>
<dbReference type="SMR" id="Q5ZX98"/>
<dbReference type="STRING" id="272624.lpg0834"/>
<dbReference type="PaxDb" id="272624-lpg0834"/>
<dbReference type="GeneID" id="57034822"/>
<dbReference type="KEGG" id="lpn:lpg0834"/>
<dbReference type="PATRIC" id="fig|272624.6.peg.863"/>
<dbReference type="eggNOG" id="COG0547">
    <property type="taxonomic scope" value="Bacteria"/>
</dbReference>
<dbReference type="HOGENOM" id="CLU_034315_2_1_6"/>
<dbReference type="OrthoDB" id="9806430at2"/>
<dbReference type="UniPathway" id="UPA00035">
    <property type="reaction ID" value="UER00041"/>
</dbReference>
<dbReference type="Proteomes" id="UP000000609">
    <property type="component" value="Chromosome"/>
</dbReference>
<dbReference type="GO" id="GO:0005829">
    <property type="term" value="C:cytosol"/>
    <property type="evidence" value="ECO:0007669"/>
    <property type="project" value="TreeGrafter"/>
</dbReference>
<dbReference type="GO" id="GO:0004048">
    <property type="term" value="F:anthranilate phosphoribosyltransferase activity"/>
    <property type="evidence" value="ECO:0007669"/>
    <property type="project" value="UniProtKB-UniRule"/>
</dbReference>
<dbReference type="GO" id="GO:0000287">
    <property type="term" value="F:magnesium ion binding"/>
    <property type="evidence" value="ECO:0007669"/>
    <property type="project" value="UniProtKB-UniRule"/>
</dbReference>
<dbReference type="GO" id="GO:0000162">
    <property type="term" value="P:L-tryptophan biosynthetic process"/>
    <property type="evidence" value="ECO:0007669"/>
    <property type="project" value="UniProtKB-UniRule"/>
</dbReference>
<dbReference type="FunFam" id="3.40.1030.10:FF:000002">
    <property type="entry name" value="Anthranilate phosphoribosyltransferase"/>
    <property type="match status" value="1"/>
</dbReference>
<dbReference type="Gene3D" id="3.40.1030.10">
    <property type="entry name" value="Nucleoside phosphorylase/phosphoribosyltransferase catalytic domain"/>
    <property type="match status" value="1"/>
</dbReference>
<dbReference type="Gene3D" id="1.20.970.10">
    <property type="entry name" value="Transferase, Pyrimidine Nucleoside Phosphorylase, Chain C"/>
    <property type="match status" value="1"/>
</dbReference>
<dbReference type="HAMAP" id="MF_00211">
    <property type="entry name" value="TrpD"/>
    <property type="match status" value="1"/>
</dbReference>
<dbReference type="InterPro" id="IPR005940">
    <property type="entry name" value="Anthranilate_Pribosyl_Tfrase"/>
</dbReference>
<dbReference type="InterPro" id="IPR000312">
    <property type="entry name" value="Glycosyl_Trfase_fam3"/>
</dbReference>
<dbReference type="InterPro" id="IPR017459">
    <property type="entry name" value="Glycosyl_Trfase_fam3_N_dom"/>
</dbReference>
<dbReference type="InterPro" id="IPR036320">
    <property type="entry name" value="Glycosyl_Trfase_fam3_N_dom_sf"/>
</dbReference>
<dbReference type="InterPro" id="IPR035902">
    <property type="entry name" value="Nuc_phospho_transferase"/>
</dbReference>
<dbReference type="NCBIfam" id="TIGR01245">
    <property type="entry name" value="trpD"/>
    <property type="match status" value="1"/>
</dbReference>
<dbReference type="PANTHER" id="PTHR43285">
    <property type="entry name" value="ANTHRANILATE PHOSPHORIBOSYLTRANSFERASE"/>
    <property type="match status" value="1"/>
</dbReference>
<dbReference type="PANTHER" id="PTHR43285:SF2">
    <property type="entry name" value="ANTHRANILATE PHOSPHORIBOSYLTRANSFERASE"/>
    <property type="match status" value="1"/>
</dbReference>
<dbReference type="Pfam" id="PF02885">
    <property type="entry name" value="Glycos_trans_3N"/>
    <property type="match status" value="1"/>
</dbReference>
<dbReference type="Pfam" id="PF00591">
    <property type="entry name" value="Glycos_transf_3"/>
    <property type="match status" value="1"/>
</dbReference>
<dbReference type="SUPFAM" id="SSF52418">
    <property type="entry name" value="Nucleoside phosphorylase/phosphoribosyltransferase catalytic domain"/>
    <property type="match status" value="1"/>
</dbReference>
<dbReference type="SUPFAM" id="SSF47648">
    <property type="entry name" value="Nucleoside phosphorylase/phosphoribosyltransferase N-terminal domain"/>
    <property type="match status" value="1"/>
</dbReference>
<proteinExistence type="inferred from homology"/>
<keyword id="KW-0028">Amino-acid biosynthesis</keyword>
<keyword id="KW-0057">Aromatic amino acid biosynthesis</keyword>
<keyword id="KW-0328">Glycosyltransferase</keyword>
<keyword id="KW-0460">Magnesium</keyword>
<keyword id="KW-0479">Metal-binding</keyword>
<keyword id="KW-1185">Reference proteome</keyword>
<keyword id="KW-0808">Transferase</keyword>
<keyword id="KW-0822">Tryptophan biosynthesis</keyword>
<accession>Q5ZX98</accession>
<name>TRPD_LEGPH</name>
<gene>
    <name evidence="1" type="primary">trpD</name>
    <name type="ordered locus">lpg0834</name>
</gene>
<protein>
    <recommendedName>
        <fullName evidence="1">Anthranilate phosphoribosyltransferase</fullName>
        <ecNumber evidence="1">2.4.2.18</ecNumber>
    </recommendedName>
</protein>
<organism>
    <name type="scientific">Legionella pneumophila subsp. pneumophila (strain Philadelphia 1 / ATCC 33152 / DSM 7513)</name>
    <dbReference type="NCBI Taxonomy" id="272624"/>
    <lineage>
        <taxon>Bacteria</taxon>
        <taxon>Pseudomonadati</taxon>
        <taxon>Pseudomonadota</taxon>
        <taxon>Gammaproteobacteria</taxon>
        <taxon>Legionellales</taxon>
        <taxon>Legionellaceae</taxon>
        <taxon>Legionella</taxon>
    </lineage>
</organism>
<evidence type="ECO:0000255" key="1">
    <source>
        <dbReference type="HAMAP-Rule" id="MF_00211"/>
    </source>
</evidence>